<reference key="1">
    <citation type="journal article" date="2009" name="PLoS Genet.">
        <title>Organised genome dynamics in the Escherichia coli species results in highly diverse adaptive paths.</title>
        <authorList>
            <person name="Touchon M."/>
            <person name="Hoede C."/>
            <person name="Tenaillon O."/>
            <person name="Barbe V."/>
            <person name="Baeriswyl S."/>
            <person name="Bidet P."/>
            <person name="Bingen E."/>
            <person name="Bonacorsi S."/>
            <person name="Bouchier C."/>
            <person name="Bouvet O."/>
            <person name="Calteau A."/>
            <person name="Chiapello H."/>
            <person name="Clermont O."/>
            <person name="Cruveiller S."/>
            <person name="Danchin A."/>
            <person name="Diard M."/>
            <person name="Dossat C."/>
            <person name="Karoui M.E."/>
            <person name="Frapy E."/>
            <person name="Garry L."/>
            <person name="Ghigo J.M."/>
            <person name="Gilles A.M."/>
            <person name="Johnson J."/>
            <person name="Le Bouguenec C."/>
            <person name="Lescat M."/>
            <person name="Mangenot S."/>
            <person name="Martinez-Jehanne V."/>
            <person name="Matic I."/>
            <person name="Nassif X."/>
            <person name="Oztas S."/>
            <person name="Petit M.A."/>
            <person name="Pichon C."/>
            <person name="Rouy Z."/>
            <person name="Ruf C.S."/>
            <person name="Schneider D."/>
            <person name="Tourret J."/>
            <person name="Vacherie B."/>
            <person name="Vallenet D."/>
            <person name="Medigue C."/>
            <person name="Rocha E.P.C."/>
            <person name="Denamur E."/>
        </authorList>
    </citation>
    <scope>NUCLEOTIDE SEQUENCE [LARGE SCALE GENOMIC DNA]</scope>
    <source>
        <strain>ATCC 35469 / DSM 13698 / BCRC 15582 / CCUG 18766 / IAM 14443 / JCM 21226 / LMG 7866 / NBRC 102419 / NCTC 12128 / CDC 0568-73</strain>
    </source>
</reference>
<keyword id="KW-0285">Flavoprotein</keyword>
<keyword id="KW-0288">FMN</keyword>
<keyword id="KW-0560">Oxidoreductase</keyword>
<gene>
    <name evidence="1" type="primary">glpB</name>
    <name type="ordered locus">EFER_0924</name>
</gene>
<proteinExistence type="inferred from homology"/>
<accession>B7LM86</accession>
<dbReference type="EC" id="1.1.5.3" evidence="1"/>
<dbReference type="EMBL" id="CU928158">
    <property type="protein sequence ID" value="CAQ88459.1"/>
    <property type="molecule type" value="Genomic_DNA"/>
</dbReference>
<dbReference type="RefSeq" id="WP_001209890.1">
    <property type="nucleotide sequence ID" value="NC_011740.1"/>
</dbReference>
<dbReference type="GeneID" id="75058017"/>
<dbReference type="KEGG" id="efe:EFER_0924"/>
<dbReference type="HOGENOM" id="CLU_047793_0_0_6"/>
<dbReference type="OrthoDB" id="6395323at2"/>
<dbReference type="UniPathway" id="UPA00618">
    <property type="reaction ID" value="UER00673"/>
</dbReference>
<dbReference type="Proteomes" id="UP000000745">
    <property type="component" value="Chromosome"/>
</dbReference>
<dbReference type="GO" id="GO:0009331">
    <property type="term" value="C:glycerol-3-phosphate dehydrogenase (FAD) complex"/>
    <property type="evidence" value="ECO:0007669"/>
    <property type="project" value="InterPro"/>
</dbReference>
<dbReference type="GO" id="GO:0004368">
    <property type="term" value="F:glycerol-3-phosphate dehydrogenase (quinone) activity"/>
    <property type="evidence" value="ECO:0007669"/>
    <property type="project" value="UniProtKB-UniRule"/>
</dbReference>
<dbReference type="GO" id="GO:0009061">
    <property type="term" value="P:anaerobic respiration"/>
    <property type="evidence" value="ECO:0007669"/>
    <property type="project" value="TreeGrafter"/>
</dbReference>
<dbReference type="GO" id="GO:0019563">
    <property type="term" value="P:glycerol catabolic process"/>
    <property type="evidence" value="ECO:0007669"/>
    <property type="project" value="UniProtKB-UniRule"/>
</dbReference>
<dbReference type="GO" id="GO:0046168">
    <property type="term" value="P:glycerol-3-phosphate catabolic process"/>
    <property type="evidence" value="ECO:0007669"/>
    <property type="project" value="TreeGrafter"/>
</dbReference>
<dbReference type="Gene3D" id="3.50.50.60">
    <property type="entry name" value="FAD/NAD(P)-binding domain"/>
    <property type="match status" value="1"/>
</dbReference>
<dbReference type="HAMAP" id="MF_00753">
    <property type="entry name" value="Glycerol3P_GlpB"/>
    <property type="match status" value="1"/>
</dbReference>
<dbReference type="InterPro" id="IPR003953">
    <property type="entry name" value="FAD-dep_OxRdtase_2_FAD-bd"/>
</dbReference>
<dbReference type="InterPro" id="IPR050315">
    <property type="entry name" value="FAD-oxidoreductase_2"/>
</dbReference>
<dbReference type="InterPro" id="IPR036188">
    <property type="entry name" value="FAD/NAD-bd_sf"/>
</dbReference>
<dbReference type="InterPro" id="IPR009158">
    <property type="entry name" value="G3P_DH_GlpB_su"/>
</dbReference>
<dbReference type="NCBIfam" id="TIGR03378">
    <property type="entry name" value="glycerol3P_GlpB"/>
    <property type="match status" value="1"/>
</dbReference>
<dbReference type="NCBIfam" id="NF003718">
    <property type="entry name" value="PRK05329.1-1"/>
    <property type="match status" value="1"/>
</dbReference>
<dbReference type="NCBIfam" id="NF003719">
    <property type="entry name" value="PRK05329.1-2"/>
    <property type="match status" value="1"/>
</dbReference>
<dbReference type="NCBIfam" id="NF003720">
    <property type="entry name" value="PRK05329.1-3"/>
    <property type="match status" value="1"/>
</dbReference>
<dbReference type="NCBIfam" id="NF003721">
    <property type="entry name" value="PRK05329.1-4"/>
    <property type="match status" value="1"/>
</dbReference>
<dbReference type="PANTHER" id="PTHR43400:SF11">
    <property type="entry name" value="ANAEROBIC GLYCEROL-3-PHOSPHATE DEHYDROGENASE SUBUNIT B"/>
    <property type="match status" value="1"/>
</dbReference>
<dbReference type="PANTHER" id="PTHR43400">
    <property type="entry name" value="FUMARATE REDUCTASE"/>
    <property type="match status" value="1"/>
</dbReference>
<dbReference type="Pfam" id="PF00890">
    <property type="entry name" value="FAD_binding_2"/>
    <property type="match status" value="1"/>
</dbReference>
<dbReference type="PIRSF" id="PIRSF000141">
    <property type="entry name" value="Anaerobic_G3P_dh"/>
    <property type="match status" value="1"/>
</dbReference>
<dbReference type="SUPFAM" id="SSF51905">
    <property type="entry name" value="FAD/NAD(P)-binding domain"/>
    <property type="match status" value="1"/>
</dbReference>
<sequence>MRFDTVIMGGGLAGLLCGLQLQKHGLRCAIVTRGQSALHFSSGSLDLLSHLPDGQAVTDIHSGLESLRQQAPAHPYSLLGPQRVLDLACQAQTLIAESGAQLQGSVEQAHQRITPLGTLRSTWLSSPEVPVWPLPAKKICVVGISGLMDFQAHLAAASLRELDLSVETAEIELPELDVLRNNATEFRAVNIARFLDNEENWSLLLDALIPVANTCEMILMPACFGLADDKLWYWLNEKLPCSLMLLPTLPPSVLGIRLQNQLQRQFVRQGGVWMPGDEVKKVTCKNGMVNEIWTRNHADIPLRPRFAVLASGSFFSGGLVAEREGIREPIVGLDVLQTATRGEWYKGDFFAPQPWQQFGVTTDEALRPSQAGKTIENLFAIGSVLGGFDPIAQGCGGGVCAVSALHAAQQIAQRAGGQQ</sequence>
<organism>
    <name type="scientific">Escherichia fergusonii (strain ATCC 35469 / DSM 13698 / CCUG 18766 / IAM 14443 / JCM 21226 / LMG 7866 / NBRC 102419 / NCTC 12128 / CDC 0568-73)</name>
    <dbReference type="NCBI Taxonomy" id="585054"/>
    <lineage>
        <taxon>Bacteria</taxon>
        <taxon>Pseudomonadati</taxon>
        <taxon>Pseudomonadota</taxon>
        <taxon>Gammaproteobacteria</taxon>
        <taxon>Enterobacterales</taxon>
        <taxon>Enterobacteriaceae</taxon>
        <taxon>Escherichia</taxon>
    </lineage>
</organism>
<feature type="chain" id="PRO_1000133363" description="Anaerobic glycerol-3-phosphate dehydrogenase subunit B">
    <location>
        <begin position="1"/>
        <end position="419"/>
    </location>
</feature>
<name>GLPB_ESCF3</name>
<evidence type="ECO:0000255" key="1">
    <source>
        <dbReference type="HAMAP-Rule" id="MF_00753"/>
    </source>
</evidence>
<comment type="function">
    <text evidence="1">Conversion of glycerol 3-phosphate to dihydroxyacetone. Uses fumarate or nitrate as electron acceptor.</text>
</comment>
<comment type="catalytic activity">
    <reaction evidence="1">
        <text>a quinone + sn-glycerol 3-phosphate = dihydroxyacetone phosphate + a quinol</text>
        <dbReference type="Rhea" id="RHEA:18977"/>
        <dbReference type="ChEBI" id="CHEBI:24646"/>
        <dbReference type="ChEBI" id="CHEBI:57597"/>
        <dbReference type="ChEBI" id="CHEBI:57642"/>
        <dbReference type="ChEBI" id="CHEBI:132124"/>
        <dbReference type="EC" id="1.1.5.3"/>
    </reaction>
</comment>
<comment type="cofactor">
    <cofactor evidence="1">
        <name>FMN</name>
        <dbReference type="ChEBI" id="CHEBI:58210"/>
    </cofactor>
</comment>
<comment type="pathway">
    <text evidence="1">Polyol metabolism; glycerol degradation via glycerol kinase pathway; glycerone phosphate from sn-glycerol 3-phosphate (anaerobic route): step 1/1.</text>
</comment>
<comment type="subunit">
    <text evidence="1">Composed of a catalytic GlpA/B dimer and of membrane bound GlpC.</text>
</comment>
<comment type="similarity">
    <text evidence="1">Belongs to the anaerobic G-3-P dehydrogenase subunit B family.</text>
</comment>
<protein>
    <recommendedName>
        <fullName evidence="1">Anaerobic glycerol-3-phosphate dehydrogenase subunit B</fullName>
        <shortName evidence="1">Anaerobic G-3-P dehydrogenase subunit B</shortName>
        <shortName evidence="1">Anaerobic G3Pdhase B</shortName>
        <ecNumber evidence="1">1.1.5.3</ecNumber>
    </recommendedName>
</protein>